<organism>
    <name type="scientific">Escherichia coli</name>
    <dbReference type="NCBI Taxonomy" id="562"/>
    <lineage>
        <taxon>Bacteria</taxon>
        <taxon>Pseudomonadati</taxon>
        <taxon>Pseudomonadota</taxon>
        <taxon>Gammaproteobacteria</taxon>
        <taxon>Enterobacterales</taxon>
        <taxon>Enterobacteriaceae</taxon>
        <taxon>Escherichia</taxon>
    </lineage>
</organism>
<comment type="function">
    <text>Involved in the biosynthesis of K99 fimbriae.</text>
</comment>
<comment type="subcellular location">
    <subcellularLocation>
        <location>Fimbrium</location>
    </subcellularLocation>
</comment>
<protein>
    <recommendedName>
        <fullName>Protein FanH</fullName>
    </recommendedName>
</protein>
<reference key="1">
    <citation type="journal article" date="1987" name="Mol. Microbiol.">
        <title>Primary structure and subcellular localization of two fimbrial subunit-like proteins involved in the biosynthesis of K99 fibrillae.</title>
        <authorList>
            <person name="Roosendaal E."/>
            <person name="Jacobs A.A.C."/>
            <person name="Rathman P."/>
            <person name="Sondermeyer C."/>
            <person name="Stegehuis F."/>
            <person name="Oudega B."/>
            <person name="de Graaf F.K."/>
        </authorList>
    </citation>
    <scope>NUCLEOTIDE SEQUENCE [GENOMIC DNA]</scope>
</reference>
<feature type="signal peptide">
    <location>
        <begin position="1"/>
        <end position="20"/>
    </location>
</feature>
<feature type="chain" id="PRO_0000009206" description="Protein FanH">
    <location>
        <begin position="21"/>
        <end position="175"/>
    </location>
</feature>
<feature type="site" description="Required for stability and transport" evidence="1">
    <location>
        <position position="174"/>
    </location>
</feature>
<feature type="disulfide bond" evidence="2">
    <location>
        <begin position="39"/>
        <end position="77"/>
    </location>
</feature>
<evidence type="ECO:0000250" key="1"/>
<evidence type="ECO:0000305" key="2"/>
<proteinExistence type="predicted"/>
<sequence>MIKKVPVLLFFMASISITHASQTATKSLGVSITLSKAQCKINNRAGISGSFVLPMISTSGQIISSKKFTTVPIIIDCTAGGNVNQLEITFGDNSSKKIDSTTWYTTNKDLGLRFSWTKDKTQGFNLGVAHNINKSIWLEGNKKFNASVDVSPVVIRNTVQGGQYTSALPVTVTFI</sequence>
<name>FANH_ECOLX</name>
<gene>
    <name type="primary">fanH</name>
</gene>
<keyword id="KW-1015">Disulfide bond</keyword>
<keyword id="KW-0281">Fimbrium</keyword>
<keyword id="KW-0614">Plasmid</keyword>
<keyword id="KW-0732">Signal</keyword>
<accession>P20862</accession>
<geneLocation type="plasmid">
    <name>pFK99</name>
</geneLocation>
<dbReference type="EMBL" id="Y00531">
    <property type="protein sequence ID" value="CAA68591.1"/>
    <property type="molecule type" value="Genomic_DNA"/>
</dbReference>
<dbReference type="PIR" id="S03756">
    <property type="entry name" value="S03756"/>
</dbReference>
<dbReference type="SMR" id="P20862"/>
<dbReference type="GO" id="GO:0009289">
    <property type="term" value="C:pilus"/>
    <property type="evidence" value="ECO:0007669"/>
    <property type="project" value="UniProtKB-SubCell"/>
</dbReference>
<dbReference type="GO" id="GO:0007155">
    <property type="term" value="P:cell adhesion"/>
    <property type="evidence" value="ECO:0007669"/>
    <property type="project" value="InterPro"/>
</dbReference>
<dbReference type="Gene3D" id="2.60.40.1090">
    <property type="entry name" value="Fimbrial-type adhesion domain"/>
    <property type="match status" value="1"/>
</dbReference>
<dbReference type="InterPro" id="IPR036937">
    <property type="entry name" value="Adhesion_dom_fimbrial_sf"/>
</dbReference>